<dbReference type="EMBL" id="X14112">
    <property type="protein sequence ID" value="CAA32343.1"/>
    <property type="molecule type" value="Genomic_DNA"/>
</dbReference>
<dbReference type="PIR" id="G28133">
    <property type="entry name" value="WMBEX7"/>
</dbReference>
<dbReference type="PDB" id="6T5A">
    <property type="method" value="X-ray"/>
    <property type="resolution" value="1.83 A"/>
    <property type="chains" value="E/F/G/H=1-296"/>
</dbReference>
<dbReference type="PDBsum" id="6T5A"/>
<dbReference type="SMR" id="P10191"/>
<dbReference type="BioGRID" id="971455">
    <property type="interactions" value="2"/>
</dbReference>
<dbReference type="Proteomes" id="UP000009294">
    <property type="component" value="Segment"/>
</dbReference>
<dbReference type="GO" id="GO:0044177">
    <property type="term" value="C:host cell Golgi apparatus"/>
    <property type="evidence" value="ECO:0007669"/>
    <property type="project" value="UniProtKB-SubCell"/>
</dbReference>
<dbReference type="GO" id="GO:0019033">
    <property type="term" value="C:viral tegument"/>
    <property type="evidence" value="ECO:0007669"/>
    <property type="project" value="UniProtKB-SubCell"/>
</dbReference>
<dbReference type="HAMAP" id="MF_04038">
    <property type="entry name" value="HSV_CEP1"/>
    <property type="match status" value="1"/>
</dbReference>
<dbReference type="InterPro" id="IPR002600">
    <property type="entry name" value="Herpes_UL7"/>
</dbReference>
<dbReference type="Pfam" id="PF01677">
    <property type="entry name" value="Herpes_UL7"/>
    <property type="match status" value="1"/>
</dbReference>
<evidence type="ECO:0000255" key="1">
    <source>
        <dbReference type="HAMAP-Rule" id="MF_04038"/>
    </source>
</evidence>
<evidence type="ECO:0000269" key="2">
    <source>
    </source>
</evidence>
<evidence type="ECO:0000269" key="3">
    <source>
    </source>
</evidence>
<evidence type="ECO:0007829" key="4">
    <source>
        <dbReference type="PDB" id="6T5A"/>
    </source>
</evidence>
<sequence length="296" mass="33059">MAAATADDEGSAATILKQAIAGDRSLVEAAEAISQQTLLRLACEVRQVGDRQPRFTATSIARVDVAPGCRLRFVLDGSPEDAYVTSEDYFKRCCGQSSYRGFAVAVLTANEDHVHSLAVPPLVLLHRFSLFNPRDLLDFELACLLMYLENCPRSHATPSTFAKVLAWLGVAGRRTSPFERVRCLFLRSCHWVLNTLMFMVYVKPFDDEFVLPHWYMARYLLANNPPPVLSALFCATPTSSSFRLPGPPPRSDCVAYNPAGIMGSCWASEEVRAPLVYWWLSETPKRQTSSLFYQFC</sequence>
<keyword id="KW-0002">3D-structure</keyword>
<keyword id="KW-1035">Host cytoplasm</keyword>
<keyword id="KW-1040">Host Golgi apparatus</keyword>
<keyword id="KW-1185">Reference proteome</keyword>
<keyword id="KW-0946">Virion</keyword>
<keyword id="KW-0920">Virion tegument</keyword>
<accession>P10191</accession>
<reference key="1">
    <citation type="journal article" date="1988" name="J. Gen. Virol.">
        <title>The complete DNA sequence of the long unique region in the genome of herpes simplex virus type 1.</title>
        <authorList>
            <person name="McGeoch D.J."/>
            <person name="Dalrymple M.A."/>
            <person name="Davison A.J."/>
            <person name="Dolan A."/>
            <person name="Frame M.C."/>
            <person name="McNab D."/>
            <person name="Perry L.J."/>
            <person name="Scott J.E."/>
            <person name="Taylor P."/>
        </authorList>
    </citation>
    <scope>NUCLEOTIDE SEQUENCE [GENOMIC DNA]</scope>
</reference>
<reference key="2">
    <citation type="journal article" date="2012" name="J. Gen. Virol.">
        <title>Biochemical analysis of infected cell polypeptide (ICP)0, ICP4, UL7 and UL23 incorporated into extracellular herpes simplex virus type 1 virions.</title>
        <authorList>
            <person name="Loret S."/>
            <person name="Lippe R."/>
        </authorList>
    </citation>
    <scope>SUBCELLULAR LOCATION</scope>
</reference>
<reference key="3">
    <citation type="journal article" date="2015" name="J. Virol.">
        <title>The HSV-1 UL51 protein interacts with the UL7 protein and plays a role in its recruitment into the virion.</title>
        <authorList>
            <person name="Roller R.J."/>
            <person name="Fetters R."/>
        </authorList>
    </citation>
    <scope>SUBUNIT</scope>
    <scope>SUBCELLULAR LOCATION</scope>
</reference>
<protein>
    <recommendedName>
        <fullName evidence="1">Cytoplasmic envelopment protein 1</fullName>
    </recommendedName>
</protein>
<organism>
    <name type="scientific">Human herpesvirus 1 (strain 17)</name>
    <name type="common">HHV-1</name>
    <name type="synonym">Human herpes simplex virus 1</name>
    <dbReference type="NCBI Taxonomy" id="10299"/>
    <lineage>
        <taxon>Viruses</taxon>
        <taxon>Duplodnaviria</taxon>
        <taxon>Heunggongvirae</taxon>
        <taxon>Peploviricota</taxon>
        <taxon>Herviviricetes</taxon>
        <taxon>Herpesvirales</taxon>
        <taxon>Orthoherpesviridae</taxon>
        <taxon>Alphaherpesvirinae</taxon>
        <taxon>Simplexvirus</taxon>
        <taxon>Simplexvirus humanalpha1</taxon>
        <taxon>Human herpesvirus 1</taxon>
    </lineage>
</organism>
<comment type="function">
    <text evidence="1">Plays a critical role in cytoplasmic virus egress. Participates in the final step of tegumentation and envelope acquisition within the host cytoplasm.</text>
</comment>
<comment type="subunit">
    <text evidence="3">Interacts with UL51; this interaction allows incorporation of UL7 within the virion.</text>
</comment>
<comment type="subcellular location">
    <subcellularLocation>
        <location evidence="1 2 3">Virion</location>
    </subcellularLocation>
    <subcellularLocation>
        <location evidence="1 2">Virion tegument</location>
    </subcellularLocation>
    <subcellularLocation>
        <location evidence="1 3">Host cytoplasm</location>
    </subcellularLocation>
    <subcellularLocation>
        <location evidence="1">Host Golgi apparatus</location>
    </subcellularLocation>
</comment>
<comment type="similarity">
    <text evidence="1">Belongs to the herpesviridae cytoplasmic envelopment protein 1 family.</text>
</comment>
<organismHost>
    <name type="scientific">Homo sapiens</name>
    <name type="common">Human</name>
    <dbReference type="NCBI Taxonomy" id="9606"/>
</organismHost>
<gene>
    <name type="primary">UL7</name>
</gene>
<name>CEP1_HHV11</name>
<proteinExistence type="evidence at protein level"/>
<feature type="chain" id="PRO_0000115914" description="Cytoplasmic envelopment protein 1">
    <location>
        <begin position="1"/>
        <end position="296"/>
    </location>
</feature>
<feature type="helix" evidence="4">
    <location>
        <begin position="12"/>
        <end position="22"/>
    </location>
</feature>
<feature type="helix" evidence="4">
    <location>
        <begin position="26"/>
        <end position="34"/>
    </location>
</feature>
<feature type="strand" evidence="4">
    <location>
        <begin position="37"/>
        <end position="46"/>
    </location>
</feature>
<feature type="strand" evidence="4">
    <location>
        <begin position="54"/>
        <end position="57"/>
    </location>
</feature>
<feature type="strand" evidence="4">
    <location>
        <begin position="59"/>
        <end position="65"/>
    </location>
</feature>
<feature type="strand" evidence="4">
    <location>
        <begin position="71"/>
        <end position="75"/>
    </location>
</feature>
<feature type="helix" evidence="4">
    <location>
        <begin position="86"/>
        <end position="94"/>
    </location>
</feature>
<feature type="strand" evidence="4">
    <location>
        <begin position="99"/>
        <end position="108"/>
    </location>
</feature>
<feature type="helix" evidence="4">
    <location>
        <begin position="109"/>
        <end position="111"/>
    </location>
</feature>
<feature type="strand" evidence="4">
    <location>
        <begin position="114"/>
        <end position="119"/>
    </location>
</feature>
<feature type="helix" evidence="4">
    <location>
        <begin position="121"/>
        <end position="124"/>
    </location>
</feature>
<feature type="helix" evidence="4">
    <location>
        <begin position="125"/>
        <end position="127"/>
    </location>
</feature>
<feature type="strand" evidence="4">
    <location>
        <begin position="128"/>
        <end position="131"/>
    </location>
</feature>
<feature type="helix" evidence="4">
    <location>
        <begin position="136"/>
        <end position="150"/>
    </location>
</feature>
<feature type="helix" evidence="4">
    <location>
        <begin position="153"/>
        <end position="155"/>
    </location>
</feature>
<feature type="helix" evidence="4">
    <location>
        <begin position="158"/>
        <end position="174"/>
    </location>
</feature>
<feature type="helix" evidence="4">
    <location>
        <begin position="180"/>
        <end position="199"/>
    </location>
</feature>
<feature type="helix" evidence="4">
    <location>
        <begin position="207"/>
        <end position="209"/>
    </location>
</feature>
<feature type="helix" evidence="4">
    <location>
        <begin position="212"/>
        <end position="220"/>
    </location>
</feature>
<feature type="strand" evidence="4">
    <location>
        <begin position="222"/>
        <end position="224"/>
    </location>
</feature>
<feature type="helix" evidence="4">
    <location>
        <begin position="227"/>
        <end position="230"/>
    </location>
</feature>
<feature type="turn" evidence="4">
    <location>
        <begin position="231"/>
        <end position="233"/>
    </location>
</feature>
<feature type="helix" evidence="4">
    <location>
        <begin position="261"/>
        <end position="267"/>
    </location>
</feature>
<feature type="helix" evidence="4">
    <location>
        <begin position="269"/>
        <end position="280"/>
    </location>
</feature>
<feature type="helix" evidence="4">
    <location>
        <begin position="288"/>
        <end position="290"/>
    </location>
</feature>
<feature type="strand" evidence="4">
    <location>
        <begin position="294"/>
        <end position="296"/>
    </location>
</feature>